<dbReference type="EMBL" id="CP000438">
    <property type="protein sequence ID" value="ABJ13072.1"/>
    <property type="molecule type" value="Genomic_DNA"/>
</dbReference>
<dbReference type="RefSeq" id="WP_003092824.1">
    <property type="nucleotide sequence ID" value="NZ_CP034244.1"/>
</dbReference>
<dbReference type="SMR" id="Q02RW5"/>
<dbReference type="KEGG" id="pau:PA14_14770"/>
<dbReference type="PseudoCAP" id="PA14_14770"/>
<dbReference type="HOGENOM" id="CLU_068529_2_0_6"/>
<dbReference type="BioCyc" id="PAER208963:G1G74-1211-MONOMER"/>
<dbReference type="Proteomes" id="UP000000653">
    <property type="component" value="Chromosome"/>
</dbReference>
<dbReference type="GO" id="GO:1990230">
    <property type="term" value="C:iron-sulfur cluster transfer complex"/>
    <property type="evidence" value="ECO:0007669"/>
    <property type="project" value="TreeGrafter"/>
</dbReference>
<dbReference type="GO" id="GO:0001671">
    <property type="term" value="F:ATPase activator activity"/>
    <property type="evidence" value="ECO:0007669"/>
    <property type="project" value="InterPro"/>
</dbReference>
<dbReference type="GO" id="GO:0051087">
    <property type="term" value="F:protein-folding chaperone binding"/>
    <property type="evidence" value="ECO:0007669"/>
    <property type="project" value="InterPro"/>
</dbReference>
<dbReference type="GO" id="GO:0044571">
    <property type="term" value="P:[2Fe-2S] cluster assembly"/>
    <property type="evidence" value="ECO:0007669"/>
    <property type="project" value="InterPro"/>
</dbReference>
<dbReference type="GO" id="GO:0051259">
    <property type="term" value="P:protein complex oligomerization"/>
    <property type="evidence" value="ECO:0007669"/>
    <property type="project" value="InterPro"/>
</dbReference>
<dbReference type="GO" id="GO:0006457">
    <property type="term" value="P:protein folding"/>
    <property type="evidence" value="ECO:0007669"/>
    <property type="project" value="UniProtKB-UniRule"/>
</dbReference>
<dbReference type="CDD" id="cd06257">
    <property type="entry name" value="DnaJ"/>
    <property type="match status" value="1"/>
</dbReference>
<dbReference type="FunFam" id="1.10.287.110:FF:000128">
    <property type="entry name" value="Co-chaperone protein HscB homolog"/>
    <property type="match status" value="1"/>
</dbReference>
<dbReference type="FunFam" id="1.20.1280.20:FF:000005">
    <property type="entry name" value="Co-chaperone protein HscB homolog"/>
    <property type="match status" value="1"/>
</dbReference>
<dbReference type="Gene3D" id="1.10.287.110">
    <property type="entry name" value="DnaJ domain"/>
    <property type="match status" value="1"/>
</dbReference>
<dbReference type="Gene3D" id="1.20.1280.20">
    <property type="entry name" value="HscB, C-terminal domain"/>
    <property type="match status" value="1"/>
</dbReference>
<dbReference type="HAMAP" id="MF_00682">
    <property type="entry name" value="HscB"/>
    <property type="match status" value="1"/>
</dbReference>
<dbReference type="InterPro" id="IPR001623">
    <property type="entry name" value="DnaJ_domain"/>
</dbReference>
<dbReference type="InterPro" id="IPR004640">
    <property type="entry name" value="HscB"/>
</dbReference>
<dbReference type="InterPro" id="IPR036386">
    <property type="entry name" value="HscB_C_sf"/>
</dbReference>
<dbReference type="InterPro" id="IPR009073">
    <property type="entry name" value="HscB_oligo_C"/>
</dbReference>
<dbReference type="InterPro" id="IPR036869">
    <property type="entry name" value="J_dom_sf"/>
</dbReference>
<dbReference type="NCBIfam" id="TIGR00714">
    <property type="entry name" value="hscB"/>
    <property type="match status" value="1"/>
</dbReference>
<dbReference type="NCBIfam" id="NF001420">
    <property type="entry name" value="PRK00294.1"/>
    <property type="match status" value="1"/>
</dbReference>
<dbReference type="PANTHER" id="PTHR14021">
    <property type="entry name" value="IRON-SULFUR CLUSTER CO-CHAPERONE PROTEIN HSCB"/>
    <property type="match status" value="1"/>
</dbReference>
<dbReference type="PANTHER" id="PTHR14021:SF15">
    <property type="entry name" value="IRON-SULFUR CLUSTER CO-CHAPERONE PROTEIN HSCB"/>
    <property type="match status" value="1"/>
</dbReference>
<dbReference type="Pfam" id="PF00226">
    <property type="entry name" value="DnaJ"/>
    <property type="match status" value="1"/>
</dbReference>
<dbReference type="Pfam" id="PF07743">
    <property type="entry name" value="HSCB_C"/>
    <property type="match status" value="1"/>
</dbReference>
<dbReference type="SMART" id="SM00271">
    <property type="entry name" value="DnaJ"/>
    <property type="match status" value="1"/>
</dbReference>
<dbReference type="SUPFAM" id="SSF46565">
    <property type="entry name" value="Chaperone J-domain"/>
    <property type="match status" value="1"/>
</dbReference>
<dbReference type="SUPFAM" id="SSF47144">
    <property type="entry name" value="HSC20 (HSCB), C-terminal oligomerisation domain"/>
    <property type="match status" value="1"/>
</dbReference>
<dbReference type="PROSITE" id="PS50076">
    <property type="entry name" value="DNAJ_2"/>
    <property type="match status" value="1"/>
</dbReference>
<reference key="1">
    <citation type="journal article" date="2006" name="Genome Biol.">
        <title>Genomic analysis reveals that Pseudomonas aeruginosa virulence is combinatorial.</title>
        <authorList>
            <person name="Lee D.G."/>
            <person name="Urbach J.M."/>
            <person name="Wu G."/>
            <person name="Liberati N.T."/>
            <person name="Feinbaum R.L."/>
            <person name="Miyata S."/>
            <person name="Diggins L.T."/>
            <person name="He J."/>
            <person name="Saucier M."/>
            <person name="Deziel E."/>
            <person name="Friedman L."/>
            <person name="Li L."/>
            <person name="Grills G."/>
            <person name="Montgomery K."/>
            <person name="Kucherlapati R."/>
            <person name="Rahme L.G."/>
            <person name="Ausubel F.M."/>
        </authorList>
    </citation>
    <scope>NUCLEOTIDE SEQUENCE [LARGE SCALE GENOMIC DNA]</scope>
    <source>
        <strain>UCBPP-PA14</strain>
    </source>
</reference>
<feature type="chain" id="PRO_1000083018" description="Co-chaperone protein HscB homolog">
    <location>
        <begin position="1"/>
        <end position="173"/>
    </location>
</feature>
<feature type="domain" description="J" evidence="1">
    <location>
        <begin position="5"/>
        <end position="77"/>
    </location>
</feature>
<gene>
    <name evidence="1" type="primary">hscB</name>
    <name type="ordered locus">PA14_14770</name>
</gene>
<comment type="function">
    <text evidence="1">Co-chaperone involved in the maturation of iron-sulfur cluster-containing proteins. Seems to help targeting proteins to be folded toward HscA.</text>
</comment>
<comment type="subunit">
    <text evidence="1">Interacts with HscA and stimulates its ATPase activity.</text>
</comment>
<comment type="similarity">
    <text evidence="1">Belongs to the HscB family.</text>
</comment>
<sequence length="173" mass="20235">MGKPCHFAQFDLQPAFLVDLDELGQRYRELVRSVHPDRFADAPEREQRLALERAAQLNEAYQTLKSAPRRALYLLTLSGHELPLEATVQDPEFLLQQMQLREELEELQDSADLAGVATFKRRLKAAQAELEREFAACWDDAQRREEAERLVRRMQFLDKLAQEVRQLEERLDD</sequence>
<keyword id="KW-0143">Chaperone</keyword>
<keyword id="KW-0346">Stress response</keyword>
<organism>
    <name type="scientific">Pseudomonas aeruginosa (strain UCBPP-PA14)</name>
    <dbReference type="NCBI Taxonomy" id="208963"/>
    <lineage>
        <taxon>Bacteria</taxon>
        <taxon>Pseudomonadati</taxon>
        <taxon>Pseudomonadota</taxon>
        <taxon>Gammaproteobacteria</taxon>
        <taxon>Pseudomonadales</taxon>
        <taxon>Pseudomonadaceae</taxon>
        <taxon>Pseudomonas</taxon>
    </lineage>
</organism>
<evidence type="ECO:0000255" key="1">
    <source>
        <dbReference type="HAMAP-Rule" id="MF_00682"/>
    </source>
</evidence>
<accession>Q02RW5</accession>
<protein>
    <recommendedName>
        <fullName evidence="1">Co-chaperone protein HscB homolog</fullName>
    </recommendedName>
</protein>
<proteinExistence type="inferred from homology"/>
<name>HSCB_PSEAB</name>